<gene>
    <name evidence="1" type="primary">accA</name>
    <name type="ordered locus">AZC_3315</name>
</gene>
<comment type="function">
    <text evidence="1">Component of the acetyl coenzyme A carboxylase (ACC) complex. First, biotin carboxylase catalyzes the carboxylation of biotin on its carrier protein (BCCP) and then the CO(2) group is transferred by the carboxyltransferase to acetyl-CoA to form malonyl-CoA.</text>
</comment>
<comment type="catalytic activity">
    <reaction evidence="1">
        <text>N(6)-carboxybiotinyl-L-lysyl-[protein] + acetyl-CoA = N(6)-biotinyl-L-lysyl-[protein] + malonyl-CoA</text>
        <dbReference type="Rhea" id="RHEA:54728"/>
        <dbReference type="Rhea" id="RHEA-COMP:10505"/>
        <dbReference type="Rhea" id="RHEA-COMP:10506"/>
        <dbReference type="ChEBI" id="CHEBI:57288"/>
        <dbReference type="ChEBI" id="CHEBI:57384"/>
        <dbReference type="ChEBI" id="CHEBI:83144"/>
        <dbReference type="ChEBI" id="CHEBI:83145"/>
        <dbReference type="EC" id="2.1.3.15"/>
    </reaction>
</comment>
<comment type="pathway">
    <text evidence="1">Lipid metabolism; malonyl-CoA biosynthesis; malonyl-CoA from acetyl-CoA: step 1/1.</text>
</comment>
<comment type="subunit">
    <text evidence="1">Acetyl-CoA carboxylase is a heterohexamer composed of biotin carboxyl carrier protein (AccB), biotin carboxylase (AccC) and two subunits each of ACCase subunit alpha (AccA) and ACCase subunit beta (AccD).</text>
</comment>
<comment type="subcellular location">
    <subcellularLocation>
        <location evidence="1">Cytoplasm</location>
    </subcellularLocation>
</comment>
<comment type="similarity">
    <text evidence="1">Belongs to the AccA family.</text>
</comment>
<protein>
    <recommendedName>
        <fullName evidence="1">Acetyl-coenzyme A carboxylase carboxyl transferase subunit alpha</fullName>
        <shortName evidence="1">ACCase subunit alpha</shortName>
        <shortName evidence="1">Acetyl-CoA carboxylase carboxyltransferase subunit alpha</shortName>
        <ecNumber evidence="1">2.1.3.15</ecNumber>
    </recommendedName>
</protein>
<proteinExistence type="inferred from homology"/>
<organism>
    <name type="scientific">Azorhizobium caulinodans (strain ATCC 43989 / DSM 5975 / JCM 20966 / LMG 6465 / NBRC 14845 / NCIMB 13405 / ORS 571)</name>
    <dbReference type="NCBI Taxonomy" id="438753"/>
    <lineage>
        <taxon>Bacteria</taxon>
        <taxon>Pseudomonadati</taxon>
        <taxon>Pseudomonadota</taxon>
        <taxon>Alphaproteobacteria</taxon>
        <taxon>Hyphomicrobiales</taxon>
        <taxon>Xanthobacteraceae</taxon>
        <taxon>Azorhizobium</taxon>
    </lineage>
</organism>
<name>ACCA_AZOC5</name>
<dbReference type="EC" id="2.1.3.15" evidence="1"/>
<dbReference type="EMBL" id="AP009384">
    <property type="protein sequence ID" value="BAF89313.1"/>
    <property type="molecule type" value="Genomic_DNA"/>
</dbReference>
<dbReference type="RefSeq" id="WP_012171838.1">
    <property type="nucleotide sequence ID" value="NC_009937.1"/>
</dbReference>
<dbReference type="SMR" id="A8IHS4"/>
<dbReference type="STRING" id="438753.AZC_3315"/>
<dbReference type="KEGG" id="azc:AZC_3315"/>
<dbReference type="eggNOG" id="COG0825">
    <property type="taxonomic scope" value="Bacteria"/>
</dbReference>
<dbReference type="HOGENOM" id="CLU_015486_0_2_5"/>
<dbReference type="UniPathway" id="UPA00655">
    <property type="reaction ID" value="UER00711"/>
</dbReference>
<dbReference type="Proteomes" id="UP000000270">
    <property type="component" value="Chromosome"/>
</dbReference>
<dbReference type="GO" id="GO:0009317">
    <property type="term" value="C:acetyl-CoA carboxylase complex"/>
    <property type="evidence" value="ECO:0007669"/>
    <property type="project" value="InterPro"/>
</dbReference>
<dbReference type="GO" id="GO:0003989">
    <property type="term" value="F:acetyl-CoA carboxylase activity"/>
    <property type="evidence" value="ECO:0007669"/>
    <property type="project" value="InterPro"/>
</dbReference>
<dbReference type="GO" id="GO:0005524">
    <property type="term" value="F:ATP binding"/>
    <property type="evidence" value="ECO:0007669"/>
    <property type="project" value="UniProtKB-KW"/>
</dbReference>
<dbReference type="GO" id="GO:0016743">
    <property type="term" value="F:carboxyl- or carbamoyltransferase activity"/>
    <property type="evidence" value="ECO:0007669"/>
    <property type="project" value="UniProtKB-UniRule"/>
</dbReference>
<dbReference type="GO" id="GO:0006633">
    <property type="term" value="P:fatty acid biosynthetic process"/>
    <property type="evidence" value="ECO:0007669"/>
    <property type="project" value="UniProtKB-KW"/>
</dbReference>
<dbReference type="GO" id="GO:2001295">
    <property type="term" value="P:malonyl-CoA biosynthetic process"/>
    <property type="evidence" value="ECO:0007669"/>
    <property type="project" value="UniProtKB-UniRule"/>
</dbReference>
<dbReference type="Gene3D" id="3.90.226.10">
    <property type="entry name" value="2-enoyl-CoA Hydratase, Chain A, domain 1"/>
    <property type="match status" value="1"/>
</dbReference>
<dbReference type="HAMAP" id="MF_00823">
    <property type="entry name" value="AcetylCoA_CT_alpha"/>
    <property type="match status" value="1"/>
</dbReference>
<dbReference type="InterPro" id="IPR001095">
    <property type="entry name" value="Acetyl_CoA_COase_a_su"/>
</dbReference>
<dbReference type="InterPro" id="IPR029045">
    <property type="entry name" value="ClpP/crotonase-like_dom_sf"/>
</dbReference>
<dbReference type="InterPro" id="IPR011763">
    <property type="entry name" value="COA_CT_C"/>
</dbReference>
<dbReference type="NCBIfam" id="TIGR00513">
    <property type="entry name" value="accA"/>
    <property type="match status" value="1"/>
</dbReference>
<dbReference type="NCBIfam" id="NF041504">
    <property type="entry name" value="AccA_sub"/>
    <property type="match status" value="1"/>
</dbReference>
<dbReference type="NCBIfam" id="NF004344">
    <property type="entry name" value="PRK05724.1"/>
    <property type="match status" value="1"/>
</dbReference>
<dbReference type="PANTHER" id="PTHR42853">
    <property type="entry name" value="ACETYL-COENZYME A CARBOXYLASE CARBOXYL TRANSFERASE SUBUNIT ALPHA"/>
    <property type="match status" value="1"/>
</dbReference>
<dbReference type="PANTHER" id="PTHR42853:SF3">
    <property type="entry name" value="ACETYL-COENZYME A CARBOXYLASE CARBOXYL TRANSFERASE SUBUNIT ALPHA, CHLOROPLASTIC"/>
    <property type="match status" value="1"/>
</dbReference>
<dbReference type="Pfam" id="PF03255">
    <property type="entry name" value="ACCA"/>
    <property type="match status" value="1"/>
</dbReference>
<dbReference type="PRINTS" id="PR01069">
    <property type="entry name" value="ACCCTRFRASEA"/>
</dbReference>
<dbReference type="SUPFAM" id="SSF52096">
    <property type="entry name" value="ClpP/crotonase"/>
    <property type="match status" value="1"/>
</dbReference>
<dbReference type="PROSITE" id="PS50989">
    <property type="entry name" value="COA_CT_CTER"/>
    <property type="match status" value="1"/>
</dbReference>
<accession>A8IHS4</accession>
<feature type="chain" id="PRO_1000072879" description="Acetyl-coenzyme A carboxylase carboxyl transferase subunit alpha">
    <location>
        <begin position="1"/>
        <end position="317"/>
    </location>
</feature>
<feature type="domain" description="CoA carboxyltransferase C-terminal" evidence="2">
    <location>
        <begin position="39"/>
        <end position="293"/>
    </location>
</feature>
<evidence type="ECO:0000255" key="1">
    <source>
        <dbReference type="HAMAP-Rule" id="MF_00823"/>
    </source>
</evidence>
<evidence type="ECO:0000255" key="2">
    <source>
        <dbReference type="PROSITE-ProRule" id="PRU01137"/>
    </source>
</evidence>
<reference key="1">
    <citation type="submission" date="2007-04" db="EMBL/GenBank/DDBJ databases">
        <title>Complete genome sequence of the nitrogen-fixing bacterium Azorhizobium caulinodans ORS571.</title>
        <authorList>
            <person name="Lee K.B."/>
            <person name="Backer P.D."/>
            <person name="Aono T."/>
            <person name="Liu C.T."/>
            <person name="Suzuki S."/>
            <person name="Suzuki T."/>
            <person name="Kaneko T."/>
            <person name="Yamada M."/>
            <person name="Tabata S."/>
            <person name="Kupfer D.M."/>
            <person name="Najar F.Z."/>
            <person name="Wiley G.B."/>
            <person name="Roe B."/>
            <person name="Binnewies T."/>
            <person name="Ussery D."/>
            <person name="Vereecke D."/>
            <person name="Gevers D."/>
            <person name="Holsters M."/>
            <person name="Oyaizu H."/>
        </authorList>
    </citation>
    <scope>NUCLEOTIDE SEQUENCE [LARGE SCALE GENOMIC DNA]</scope>
    <source>
        <strain>ATCC 43989 / DSM 5975 / JCM 20966 / LMG 6465 / NBRC 14845 / NCIMB 13405 / ORS 571</strain>
    </source>
</reference>
<sequence length="317" mass="33707">MRSYLDFEKPVAELEAKVEELRALSSPDDGVSIADEVQKLEGKAQEALTQLYASLTPWQKTLVARHPARPHFSDFAKGLFTDFTPLAGDRKYGEDEALIGAFARFRGEAVCVLGHEKGSTTETRIRHNFGMARPEGYRKAVRIMELADRFGLPLISLVDTAGAYPGIGAEERGQAEAIARSTDAGLGLGVPNVAVVIGEGGSGGAIAIAAANKVLMLEHAVYSVISPEGAASILWRDTSKAQEAATNMKITAQDLLRFGIVDDIVREPVGGAHRDPKAAIEATGNAIAEAMGSLAGLDADAVRKARRAKFLAIGRTL</sequence>
<keyword id="KW-0067">ATP-binding</keyword>
<keyword id="KW-0963">Cytoplasm</keyword>
<keyword id="KW-0275">Fatty acid biosynthesis</keyword>
<keyword id="KW-0276">Fatty acid metabolism</keyword>
<keyword id="KW-0444">Lipid biosynthesis</keyword>
<keyword id="KW-0443">Lipid metabolism</keyword>
<keyword id="KW-0547">Nucleotide-binding</keyword>
<keyword id="KW-1185">Reference proteome</keyword>
<keyword id="KW-0808">Transferase</keyword>